<organism>
    <name type="scientific">Escherichia coli O157:H7</name>
    <dbReference type="NCBI Taxonomy" id="83334"/>
    <lineage>
        <taxon>Bacteria</taxon>
        <taxon>Pseudomonadati</taxon>
        <taxon>Pseudomonadota</taxon>
        <taxon>Gammaproteobacteria</taxon>
        <taxon>Enterobacterales</taxon>
        <taxon>Enterobacteriaceae</taxon>
        <taxon>Escherichia</taxon>
    </lineage>
</organism>
<gene>
    <name evidence="2" type="primary">ppk</name>
    <name type="ordered locus">Z3764</name>
    <name type="ordered locus">ECs3363</name>
</gene>
<accession>P0A7B2</accession>
<accession>P28688</accession>
<accession>Q47549</accession>
<protein>
    <recommendedName>
        <fullName evidence="2">Polyphosphate kinase</fullName>
        <ecNumber evidence="2">2.7.4.1</ecNumber>
    </recommendedName>
    <alternativeName>
        <fullName evidence="2">ATP-polyphosphate phosphotransferase</fullName>
    </alternativeName>
    <alternativeName>
        <fullName evidence="2">Polyphosphoric acid kinase</fullName>
    </alternativeName>
</protein>
<keyword id="KW-0067">ATP-binding</keyword>
<keyword id="KW-0418">Kinase</keyword>
<keyword id="KW-0460">Magnesium</keyword>
<keyword id="KW-0479">Metal-binding</keyword>
<keyword id="KW-0547">Nucleotide-binding</keyword>
<keyword id="KW-0597">Phosphoprotein</keyword>
<keyword id="KW-1185">Reference proteome</keyword>
<keyword id="KW-0808">Transferase</keyword>
<reference key="1">
    <citation type="journal article" date="2001" name="Nature">
        <title>Genome sequence of enterohaemorrhagic Escherichia coli O157:H7.</title>
        <authorList>
            <person name="Perna N.T."/>
            <person name="Plunkett G. III"/>
            <person name="Burland V."/>
            <person name="Mau B."/>
            <person name="Glasner J.D."/>
            <person name="Rose D.J."/>
            <person name="Mayhew G.F."/>
            <person name="Evans P.S."/>
            <person name="Gregor J."/>
            <person name="Kirkpatrick H.A."/>
            <person name="Posfai G."/>
            <person name="Hackett J."/>
            <person name="Klink S."/>
            <person name="Boutin A."/>
            <person name="Shao Y."/>
            <person name="Miller L."/>
            <person name="Grotbeck E.J."/>
            <person name="Davis N.W."/>
            <person name="Lim A."/>
            <person name="Dimalanta E.T."/>
            <person name="Potamousis K."/>
            <person name="Apodaca J."/>
            <person name="Anantharaman T.S."/>
            <person name="Lin J."/>
            <person name="Yen G."/>
            <person name="Schwartz D.C."/>
            <person name="Welch R.A."/>
            <person name="Blattner F.R."/>
        </authorList>
    </citation>
    <scope>NUCLEOTIDE SEQUENCE [LARGE SCALE GENOMIC DNA]</scope>
    <source>
        <strain>O157:H7 / EDL933 / ATCC 700927 / EHEC</strain>
    </source>
</reference>
<reference key="2">
    <citation type="journal article" date="2001" name="DNA Res.">
        <title>Complete genome sequence of enterohemorrhagic Escherichia coli O157:H7 and genomic comparison with a laboratory strain K-12.</title>
        <authorList>
            <person name="Hayashi T."/>
            <person name="Makino K."/>
            <person name="Ohnishi M."/>
            <person name="Kurokawa K."/>
            <person name="Ishii K."/>
            <person name="Yokoyama K."/>
            <person name="Han C.-G."/>
            <person name="Ohtsubo E."/>
            <person name="Nakayama K."/>
            <person name="Murata T."/>
            <person name="Tanaka M."/>
            <person name="Tobe T."/>
            <person name="Iida T."/>
            <person name="Takami H."/>
            <person name="Honda T."/>
            <person name="Sasakawa C."/>
            <person name="Ogasawara N."/>
            <person name="Yasunaga T."/>
            <person name="Kuhara S."/>
            <person name="Shiba T."/>
            <person name="Hattori M."/>
            <person name="Shinagawa H."/>
        </authorList>
    </citation>
    <scope>NUCLEOTIDE SEQUENCE [LARGE SCALE GENOMIC DNA]</scope>
    <source>
        <strain>O157:H7 / Sakai / RIMD 0509952 / EHEC</strain>
    </source>
</reference>
<sequence>MGQEKLYIEKELSWLSFNERVLQEAADKSNPLIERMRFLGIYSNNLDEFYKVRFAELKRRIIISEEQGSNSHSRHLLGKIQSRVLKADQEFDGLYNELLLEMARNQIFLINERQLSVNQQNWLRHYFKQYLRQHITPILINPDTDLVQFLKDDYTYLAVEIIRGDTIRYALLEIPSDKVPRFVNLPPEAPRRRKPMILLDNILRYCLDDIFKGFFDYDALNAYSMKMTRDAEYDLVHEMEASLMELMSSSLKQRLTAEPVRFVYQRDMPNALVEVLREKLTISRYDSIVPGGRYHNFKDFINFPNVGKANLVNKPLPRLRHIWFDKAQFRNGFDAIRERDVLLYYPYHTFEHVLELLRQASFDPSVLAIKINIYRVAKDSRIIDSMIHAAHNGKKVTVVVELQARFDEEANIHWAKRLTEAGVHVIFSAPGLKIHAKLFLISRKENGEVVRYAHIGTGNFNEKTARLYTDYSLLTADARITNEVRRVFNFIENPYRPVTFDYLMVSPQNSRRLLYEMVDREIANAQQGLPSGITLKLNNLVDKGLVDRLYAASSSGVPVNLLVRGMCSLIPNLEGISDNIRAISIVDRYLEHDRVYIFENGGDKKVYLSSADWMTRNIDYRIEVATPLLDPRLKQRVLDIIDILFSDTVKARYIDKELSNRYVPRGNRRKVRAQLAIYDYIKSLEQPE</sequence>
<comment type="function">
    <text evidence="2">Catalyzes the reversible transfer of the terminal phosphate of ATP to form a long-chain polyphosphate (polyP).</text>
</comment>
<comment type="catalytic activity">
    <reaction evidence="2">
        <text>[phosphate](n) + ATP = [phosphate](n+1) + ADP</text>
        <dbReference type="Rhea" id="RHEA:19573"/>
        <dbReference type="Rhea" id="RHEA-COMP:9859"/>
        <dbReference type="Rhea" id="RHEA-COMP:14280"/>
        <dbReference type="ChEBI" id="CHEBI:16838"/>
        <dbReference type="ChEBI" id="CHEBI:30616"/>
        <dbReference type="ChEBI" id="CHEBI:456216"/>
        <dbReference type="EC" id="2.7.4.1"/>
    </reaction>
</comment>
<comment type="cofactor">
    <cofactor evidence="2">
        <name>Mg(2+)</name>
        <dbReference type="ChEBI" id="CHEBI:18420"/>
    </cofactor>
</comment>
<comment type="PTM">
    <text evidence="2">An intermediate of this reaction is the autophosphorylated ppk in which a phosphate is covalently linked to a histidine residue through a N-P bond.</text>
</comment>
<comment type="similarity">
    <text evidence="2">Belongs to the polyphosphate kinase 1 (PPK1) family.</text>
</comment>
<name>PPK1_ECO57</name>
<dbReference type="EC" id="2.7.4.1" evidence="2"/>
<dbReference type="EMBL" id="AE005174">
    <property type="protein sequence ID" value="AAG57611.1"/>
    <property type="molecule type" value="Genomic_DNA"/>
</dbReference>
<dbReference type="EMBL" id="BA000007">
    <property type="protein sequence ID" value="BAB36786.1"/>
    <property type="molecule type" value="Genomic_DNA"/>
</dbReference>
<dbReference type="PIR" id="C91049">
    <property type="entry name" value="C91049"/>
</dbReference>
<dbReference type="PIR" id="G85893">
    <property type="entry name" value="G85893"/>
</dbReference>
<dbReference type="RefSeq" id="NP_311390.1">
    <property type="nucleotide sequence ID" value="NC_002695.1"/>
</dbReference>
<dbReference type="SMR" id="P0A7B2"/>
<dbReference type="STRING" id="155864.Z3764"/>
<dbReference type="GeneID" id="912733"/>
<dbReference type="KEGG" id="ece:Z3764"/>
<dbReference type="KEGG" id="ecs:ECs_3363"/>
<dbReference type="PATRIC" id="fig|386585.9.peg.3513"/>
<dbReference type="eggNOG" id="COG0855">
    <property type="taxonomic scope" value="Bacteria"/>
</dbReference>
<dbReference type="HOGENOM" id="CLU_009678_6_1_6"/>
<dbReference type="OMA" id="MTLYRVG"/>
<dbReference type="Proteomes" id="UP000000558">
    <property type="component" value="Chromosome"/>
</dbReference>
<dbReference type="Proteomes" id="UP000002519">
    <property type="component" value="Chromosome"/>
</dbReference>
<dbReference type="GO" id="GO:0009358">
    <property type="term" value="C:polyphosphate kinase complex"/>
    <property type="evidence" value="ECO:0007669"/>
    <property type="project" value="InterPro"/>
</dbReference>
<dbReference type="GO" id="GO:0005524">
    <property type="term" value="F:ATP binding"/>
    <property type="evidence" value="ECO:0007669"/>
    <property type="project" value="UniProtKB-KW"/>
</dbReference>
<dbReference type="GO" id="GO:0046872">
    <property type="term" value="F:metal ion binding"/>
    <property type="evidence" value="ECO:0007669"/>
    <property type="project" value="UniProtKB-KW"/>
</dbReference>
<dbReference type="GO" id="GO:0008976">
    <property type="term" value="F:polyphosphate kinase activity"/>
    <property type="evidence" value="ECO:0007669"/>
    <property type="project" value="UniProtKB-UniRule"/>
</dbReference>
<dbReference type="GO" id="GO:0006799">
    <property type="term" value="P:polyphosphate biosynthetic process"/>
    <property type="evidence" value="ECO:0007669"/>
    <property type="project" value="UniProtKB-UniRule"/>
</dbReference>
<dbReference type="CDD" id="cd09167">
    <property type="entry name" value="PLDc_EcPPK1_C2_like"/>
    <property type="match status" value="1"/>
</dbReference>
<dbReference type="CDD" id="cd09114">
    <property type="entry name" value="PLDc_PPK1_C1"/>
    <property type="match status" value="1"/>
</dbReference>
<dbReference type="FunFam" id="1.20.58.310:FF:000001">
    <property type="entry name" value="Polyphosphate kinase"/>
    <property type="match status" value="1"/>
</dbReference>
<dbReference type="FunFam" id="3.30.1840.10:FF:000001">
    <property type="entry name" value="Polyphosphate kinase"/>
    <property type="match status" value="1"/>
</dbReference>
<dbReference type="FunFam" id="3.30.870.10:FF:000001">
    <property type="entry name" value="Polyphosphate kinase"/>
    <property type="match status" value="1"/>
</dbReference>
<dbReference type="FunFam" id="3.30.870.10:FF:000007">
    <property type="entry name" value="Polyphosphate kinase"/>
    <property type="match status" value="1"/>
</dbReference>
<dbReference type="Gene3D" id="3.30.870.10">
    <property type="entry name" value="Endonuclease Chain A"/>
    <property type="match status" value="2"/>
</dbReference>
<dbReference type="Gene3D" id="3.30.1840.10">
    <property type="entry name" value="Polyphosphate kinase middle domain"/>
    <property type="match status" value="1"/>
</dbReference>
<dbReference type="Gene3D" id="1.20.58.310">
    <property type="entry name" value="Polyphosphate kinase N-terminal domain"/>
    <property type="match status" value="1"/>
</dbReference>
<dbReference type="HAMAP" id="MF_00347">
    <property type="entry name" value="Polyphosphate_kinase"/>
    <property type="match status" value="1"/>
</dbReference>
<dbReference type="InterPro" id="IPR001736">
    <property type="entry name" value="PLipase_D/transphosphatidylase"/>
</dbReference>
<dbReference type="InterPro" id="IPR003414">
    <property type="entry name" value="PP_kinase"/>
</dbReference>
<dbReference type="InterPro" id="IPR041108">
    <property type="entry name" value="PP_kinase_C_1"/>
</dbReference>
<dbReference type="InterPro" id="IPR024953">
    <property type="entry name" value="PP_kinase_middle"/>
</dbReference>
<dbReference type="InterPro" id="IPR036830">
    <property type="entry name" value="PP_kinase_middle_dom_sf"/>
</dbReference>
<dbReference type="InterPro" id="IPR025200">
    <property type="entry name" value="PPK_C_dom2"/>
</dbReference>
<dbReference type="InterPro" id="IPR025198">
    <property type="entry name" value="PPK_N_dom"/>
</dbReference>
<dbReference type="InterPro" id="IPR036832">
    <property type="entry name" value="PPK_N_dom_sf"/>
</dbReference>
<dbReference type="NCBIfam" id="TIGR03705">
    <property type="entry name" value="poly_P_kin"/>
    <property type="match status" value="1"/>
</dbReference>
<dbReference type="NCBIfam" id="NF003917">
    <property type="entry name" value="PRK05443.1-1"/>
    <property type="match status" value="1"/>
</dbReference>
<dbReference type="PANTHER" id="PTHR30218">
    <property type="entry name" value="POLYPHOSPHATE KINASE"/>
    <property type="match status" value="1"/>
</dbReference>
<dbReference type="PANTHER" id="PTHR30218:SF0">
    <property type="entry name" value="POLYPHOSPHATE KINASE"/>
    <property type="match status" value="1"/>
</dbReference>
<dbReference type="Pfam" id="PF02503">
    <property type="entry name" value="PP_kinase"/>
    <property type="match status" value="1"/>
</dbReference>
<dbReference type="Pfam" id="PF13090">
    <property type="entry name" value="PP_kinase_C"/>
    <property type="match status" value="1"/>
</dbReference>
<dbReference type="Pfam" id="PF17941">
    <property type="entry name" value="PP_kinase_C_1"/>
    <property type="match status" value="1"/>
</dbReference>
<dbReference type="Pfam" id="PF13089">
    <property type="entry name" value="PP_kinase_N"/>
    <property type="match status" value="1"/>
</dbReference>
<dbReference type="PIRSF" id="PIRSF015589">
    <property type="entry name" value="PP_kinase"/>
    <property type="match status" value="1"/>
</dbReference>
<dbReference type="SUPFAM" id="SSF56024">
    <property type="entry name" value="Phospholipase D/nuclease"/>
    <property type="match status" value="2"/>
</dbReference>
<dbReference type="SUPFAM" id="SSF143724">
    <property type="entry name" value="PHP14-like"/>
    <property type="match status" value="1"/>
</dbReference>
<dbReference type="SUPFAM" id="SSF140356">
    <property type="entry name" value="PPK N-terminal domain-like"/>
    <property type="match status" value="1"/>
</dbReference>
<dbReference type="PROSITE" id="PS50035">
    <property type="entry name" value="PLD"/>
    <property type="match status" value="1"/>
</dbReference>
<proteinExistence type="inferred from homology"/>
<evidence type="ECO:0000250" key="1"/>
<evidence type="ECO:0000255" key="2">
    <source>
        <dbReference type="HAMAP-Rule" id="MF_00347"/>
    </source>
</evidence>
<feature type="initiator methionine" description="Removed" evidence="1">
    <location>
        <position position="1"/>
    </location>
</feature>
<feature type="chain" id="PRO_0000128641" description="Polyphosphate kinase">
    <location>
        <begin position="2"/>
        <end position="688"/>
    </location>
</feature>
<feature type="domain" description="PLD phosphodiesterase" evidence="2">
    <location>
        <begin position="430"/>
        <end position="464"/>
    </location>
</feature>
<feature type="active site" description="Phosphohistidine intermediate" evidence="2">
    <location>
        <position position="435"/>
    </location>
</feature>
<feature type="binding site" evidence="2">
    <location>
        <position position="45"/>
    </location>
    <ligand>
        <name>ATP</name>
        <dbReference type="ChEBI" id="CHEBI:30616"/>
    </ligand>
</feature>
<feature type="binding site" evidence="2">
    <location>
        <position position="375"/>
    </location>
    <ligand>
        <name>Mg(2+)</name>
        <dbReference type="ChEBI" id="CHEBI:18420"/>
    </ligand>
</feature>
<feature type="binding site" evidence="2">
    <location>
        <position position="405"/>
    </location>
    <ligand>
        <name>Mg(2+)</name>
        <dbReference type="ChEBI" id="CHEBI:18420"/>
    </ligand>
</feature>
<feature type="binding site" evidence="2">
    <location>
        <position position="468"/>
    </location>
    <ligand>
        <name>ATP</name>
        <dbReference type="ChEBI" id="CHEBI:30616"/>
    </ligand>
</feature>
<feature type="binding site" evidence="2">
    <location>
        <position position="564"/>
    </location>
    <ligand>
        <name>ATP</name>
        <dbReference type="ChEBI" id="CHEBI:30616"/>
    </ligand>
</feature>
<feature type="binding site" evidence="2">
    <location>
        <position position="592"/>
    </location>
    <ligand>
        <name>ATP</name>
        <dbReference type="ChEBI" id="CHEBI:30616"/>
    </ligand>
</feature>